<comment type="function">
    <text evidence="1">Catalyzes the condensation of (S)-aspartate-beta-semialdehyde [(S)-ASA] and pyruvate to 4-hydroxy-tetrahydrodipicolinate (HTPA).</text>
</comment>
<comment type="catalytic activity">
    <reaction evidence="1">
        <text>L-aspartate 4-semialdehyde + pyruvate = (2S,4S)-4-hydroxy-2,3,4,5-tetrahydrodipicolinate + H2O + H(+)</text>
        <dbReference type="Rhea" id="RHEA:34171"/>
        <dbReference type="ChEBI" id="CHEBI:15361"/>
        <dbReference type="ChEBI" id="CHEBI:15377"/>
        <dbReference type="ChEBI" id="CHEBI:15378"/>
        <dbReference type="ChEBI" id="CHEBI:67139"/>
        <dbReference type="ChEBI" id="CHEBI:537519"/>
        <dbReference type="EC" id="4.3.3.7"/>
    </reaction>
</comment>
<comment type="pathway">
    <text evidence="1">Amino-acid biosynthesis; L-lysine biosynthesis via DAP pathway; (S)-tetrahydrodipicolinate from L-aspartate: step 3/4.</text>
</comment>
<comment type="subunit">
    <text evidence="1">Homotetramer; dimer of dimers.</text>
</comment>
<comment type="subcellular location">
    <subcellularLocation>
        <location evidence="1">Cytoplasm</location>
    </subcellularLocation>
</comment>
<comment type="similarity">
    <text evidence="1">Belongs to the DapA family.</text>
</comment>
<comment type="caution">
    <text evidence="2">Was originally thought to be a dihydrodipicolinate synthase (DHDPS), catalyzing the condensation of (S)-aspartate-beta-semialdehyde [(S)-ASA] and pyruvate to dihydrodipicolinate (DHDP). However, it was shown in E.coli that the product of the enzymatic reaction is not dihydrodipicolinate but in fact (4S)-4-hydroxy-2,3,4,5-tetrahydro-(2S)-dipicolinic acid (HTPA), and that the consecutive dehydration reaction leading to DHDP is not spontaneous but catalyzed by DapB.</text>
</comment>
<proteinExistence type="inferred from homology"/>
<feature type="chain" id="PRO_1000050165" description="4-hydroxy-tetrahydrodipicolinate synthase">
    <location>
        <begin position="1"/>
        <end position="294"/>
    </location>
</feature>
<feature type="active site" description="Proton donor/acceptor" evidence="1">
    <location>
        <position position="133"/>
    </location>
</feature>
<feature type="active site" description="Schiff-base intermediate with substrate" evidence="1">
    <location>
        <position position="162"/>
    </location>
</feature>
<feature type="binding site" evidence="1">
    <location>
        <position position="45"/>
    </location>
    <ligand>
        <name>pyruvate</name>
        <dbReference type="ChEBI" id="CHEBI:15361"/>
    </ligand>
</feature>
<feature type="binding site" evidence="1">
    <location>
        <position position="204"/>
    </location>
    <ligand>
        <name>pyruvate</name>
        <dbReference type="ChEBI" id="CHEBI:15361"/>
    </ligand>
</feature>
<feature type="site" description="Part of a proton relay during catalysis" evidence="1">
    <location>
        <position position="44"/>
    </location>
</feature>
<feature type="site" description="Part of a proton relay during catalysis" evidence="1">
    <location>
        <position position="107"/>
    </location>
</feature>
<name>DAPA_BARBK</name>
<protein>
    <recommendedName>
        <fullName evidence="1">4-hydroxy-tetrahydrodipicolinate synthase</fullName>
        <shortName evidence="1">HTPA synthase</shortName>
        <ecNumber evidence="1">4.3.3.7</ecNumber>
    </recommendedName>
</protein>
<reference key="1">
    <citation type="submission" date="2006-12" db="EMBL/GenBank/DDBJ databases">
        <authorList>
            <person name="Hendrix L."/>
            <person name="Mohamoud Y."/>
            <person name="Radune D."/>
            <person name="Shvartsbeyn A."/>
            <person name="Daugherty S."/>
            <person name="Dodson R."/>
            <person name="Durkin A.S."/>
            <person name="Harkins D."/>
            <person name="Huot H."/>
            <person name="Kothari S.P."/>
            <person name="Madupu R."/>
            <person name="Li J."/>
            <person name="Nelson W.C."/>
            <person name="Shrivastava S."/>
            <person name="Giglio M.G."/>
            <person name="Haft D."/>
            <person name="Selengut J."/>
            <person name="Fraser-Ligget C."/>
            <person name="Seshadri R."/>
        </authorList>
    </citation>
    <scope>NUCLEOTIDE SEQUENCE [LARGE SCALE GENOMIC DNA]</scope>
    <source>
        <strain>ATCC 35685 / KC583 / Herrer 020/F12,63</strain>
    </source>
</reference>
<keyword id="KW-0028">Amino-acid biosynthesis</keyword>
<keyword id="KW-0963">Cytoplasm</keyword>
<keyword id="KW-0220">Diaminopimelate biosynthesis</keyword>
<keyword id="KW-0456">Lyase</keyword>
<keyword id="KW-0457">Lysine biosynthesis</keyword>
<keyword id="KW-0704">Schiff base</keyword>
<accession>A1US27</accession>
<gene>
    <name evidence="1" type="primary">dapA</name>
    <name type="ordered locus">BARBAKC583_0464</name>
</gene>
<sequence length="294" mass="31618">MLKGALTALITPFNENGSVDEETFCNFIEWQITQGIDGLIPAGTTGESPTLSHEEHKKVIELCVEKVAKRVPVVAGAGSNSTDEAVELAQHAKKAGADAVLVVTPYYNKPNQEGIYSHFATIAKAVSIPIVIYNIPGRSVVDMAVETMKDLCQNFKNIIGVKDSTGNIERVSEQREKCGKDFVQLSGDDQTALGFNAHGGVGCVSVASNVAPKLCAELYAACRSGDYKTALELNDRLMPLNRSIFIEPSPSGIKYAVAKLGFCRDTVRLPLVPLKDTTKEIIDAALQHAGLIKE</sequence>
<organism>
    <name type="scientific">Bartonella bacilliformis (strain ATCC 35685 / KC583 / Herrer 020/F12,63)</name>
    <dbReference type="NCBI Taxonomy" id="360095"/>
    <lineage>
        <taxon>Bacteria</taxon>
        <taxon>Pseudomonadati</taxon>
        <taxon>Pseudomonadota</taxon>
        <taxon>Alphaproteobacteria</taxon>
        <taxon>Hyphomicrobiales</taxon>
        <taxon>Bartonellaceae</taxon>
        <taxon>Bartonella</taxon>
    </lineage>
</organism>
<dbReference type="EC" id="4.3.3.7" evidence="1"/>
<dbReference type="EMBL" id="CP000524">
    <property type="protein sequence ID" value="ABM44638.1"/>
    <property type="molecule type" value="Genomic_DNA"/>
</dbReference>
<dbReference type="RefSeq" id="WP_005766524.1">
    <property type="nucleotide sequence ID" value="NC_008783.1"/>
</dbReference>
<dbReference type="SMR" id="A1US27"/>
<dbReference type="STRING" id="360095.BARBAKC583_0464"/>
<dbReference type="GeneID" id="4684902"/>
<dbReference type="KEGG" id="bbk:BARBAKC583_0464"/>
<dbReference type="PATRIC" id="fig|360095.6.peg.446"/>
<dbReference type="eggNOG" id="COG0329">
    <property type="taxonomic scope" value="Bacteria"/>
</dbReference>
<dbReference type="HOGENOM" id="CLU_049343_7_1_5"/>
<dbReference type="OrthoDB" id="9782828at2"/>
<dbReference type="UniPathway" id="UPA00034">
    <property type="reaction ID" value="UER00017"/>
</dbReference>
<dbReference type="Proteomes" id="UP000000643">
    <property type="component" value="Chromosome"/>
</dbReference>
<dbReference type="GO" id="GO:0005829">
    <property type="term" value="C:cytosol"/>
    <property type="evidence" value="ECO:0007669"/>
    <property type="project" value="TreeGrafter"/>
</dbReference>
<dbReference type="GO" id="GO:0008840">
    <property type="term" value="F:4-hydroxy-tetrahydrodipicolinate synthase activity"/>
    <property type="evidence" value="ECO:0007669"/>
    <property type="project" value="UniProtKB-UniRule"/>
</dbReference>
<dbReference type="GO" id="GO:0019877">
    <property type="term" value="P:diaminopimelate biosynthetic process"/>
    <property type="evidence" value="ECO:0007669"/>
    <property type="project" value="UniProtKB-UniRule"/>
</dbReference>
<dbReference type="GO" id="GO:0009089">
    <property type="term" value="P:lysine biosynthetic process via diaminopimelate"/>
    <property type="evidence" value="ECO:0007669"/>
    <property type="project" value="UniProtKB-UniRule"/>
</dbReference>
<dbReference type="CDD" id="cd00950">
    <property type="entry name" value="DHDPS"/>
    <property type="match status" value="1"/>
</dbReference>
<dbReference type="Gene3D" id="3.20.20.70">
    <property type="entry name" value="Aldolase class I"/>
    <property type="match status" value="1"/>
</dbReference>
<dbReference type="HAMAP" id="MF_00418">
    <property type="entry name" value="DapA"/>
    <property type="match status" value="1"/>
</dbReference>
<dbReference type="InterPro" id="IPR013785">
    <property type="entry name" value="Aldolase_TIM"/>
</dbReference>
<dbReference type="InterPro" id="IPR005263">
    <property type="entry name" value="DapA"/>
</dbReference>
<dbReference type="InterPro" id="IPR002220">
    <property type="entry name" value="DapA-like"/>
</dbReference>
<dbReference type="InterPro" id="IPR020625">
    <property type="entry name" value="Schiff_base-form_aldolases_AS"/>
</dbReference>
<dbReference type="InterPro" id="IPR020624">
    <property type="entry name" value="Schiff_base-form_aldolases_CS"/>
</dbReference>
<dbReference type="NCBIfam" id="TIGR00674">
    <property type="entry name" value="dapA"/>
    <property type="match status" value="1"/>
</dbReference>
<dbReference type="PANTHER" id="PTHR12128:SF66">
    <property type="entry name" value="4-HYDROXY-2-OXOGLUTARATE ALDOLASE, MITOCHONDRIAL"/>
    <property type="match status" value="1"/>
</dbReference>
<dbReference type="PANTHER" id="PTHR12128">
    <property type="entry name" value="DIHYDRODIPICOLINATE SYNTHASE"/>
    <property type="match status" value="1"/>
</dbReference>
<dbReference type="Pfam" id="PF00701">
    <property type="entry name" value="DHDPS"/>
    <property type="match status" value="1"/>
</dbReference>
<dbReference type="PIRSF" id="PIRSF001365">
    <property type="entry name" value="DHDPS"/>
    <property type="match status" value="1"/>
</dbReference>
<dbReference type="PRINTS" id="PR00146">
    <property type="entry name" value="DHPICSNTHASE"/>
</dbReference>
<dbReference type="SMART" id="SM01130">
    <property type="entry name" value="DHDPS"/>
    <property type="match status" value="1"/>
</dbReference>
<dbReference type="SUPFAM" id="SSF51569">
    <property type="entry name" value="Aldolase"/>
    <property type="match status" value="1"/>
</dbReference>
<dbReference type="PROSITE" id="PS00665">
    <property type="entry name" value="DHDPS_1"/>
    <property type="match status" value="1"/>
</dbReference>
<dbReference type="PROSITE" id="PS00666">
    <property type="entry name" value="DHDPS_2"/>
    <property type="match status" value="1"/>
</dbReference>
<evidence type="ECO:0000255" key="1">
    <source>
        <dbReference type="HAMAP-Rule" id="MF_00418"/>
    </source>
</evidence>
<evidence type="ECO:0000305" key="2"/>